<proteinExistence type="inferred from homology"/>
<feature type="chain" id="PRO_1000164829" description="Uracil phosphoribosyltransferase">
    <location>
        <begin position="1"/>
        <end position="209"/>
    </location>
</feature>
<feature type="binding site" evidence="1">
    <location>
        <position position="79"/>
    </location>
    <ligand>
        <name>5-phospho-alpha-D-ribose 1-diphosphate</name>
        <dbReference type="ChEBI" id="CHEBI:58017"/>
    </ligand>
</feature>
<feature type="binding site" evidence="1">
    <location>
        <position position="104"/>
    </location>
    <ligand>
        <name>5-phospho-alpha-D-ribose 1-diphosphate</name>
        <dbReference type="ChEBI" id="CHEBI:58017"/>
    </ligand>
</feature>
<feature type="binding site" evidence="1">
    <location>
        <begin position="131"/>
        <end position="139"/>
    </location>
    <ligand>
        <name>5-phospho-alpha-D-ribose 1-diphosphate</name>
        <dbReference type="ChEBI" id="CHEBI:58017"/>
    </ligand>
</feature>
<feature type="binding site" evidence="1">
    <location>
        <position position="194"/>
    </location>
    <ligand>
        <name>uracil</name>
        <dbReference type="ChEBI" id="CHEBI:17568"/>
    </ligand>
</feature>
<feature type="binding site" evidence="1">
    <location>
        <begin position="199"/>
        <end position="201"/>
    </location>
    <ligand>
        <name>uracil</name>
        <dbReference type="ChEBI" id="CHEBI:17568"/>
    </ligand>
</feature>
<feature type="binding site" evidence="1">
    <location>
        <position position="200"/>
    </location>
    <ligand>
        <name>5-phospho-alpha-D-ribose 1-diphosphate</name>
        <dbReference type="ChEBI" id="CHEBI:58017"/>
    </ligand>
</feature>
<accession>B8DBH1</accession>
<protein>
    <recommendedName>
        <fullName evidence="1">Uracil phosphoribosyltransferase</fullName>
        <ecNumber evidence="1">2.4.2.9</ecNumber>
    </recommendedName>
    <alternativeName>
        <fullName evidence="1">UMP pyrophosphorylase</fullName>
    </alternativeName>
    <alternativeName>
        <fullName evidence="1">UPRTase</fullName>
    </alternativeName>
</protein>
<gene>
    <name evidence="1" type="primary">upp</name>
    <name type="ordered locus">LMHCC_0059</name>
</gene>
<keyword id="KW-0021">Allosteric enzyme</keyword>
<keyword id="KW-0328">Glycosyltransferase</keyword>
<keyword id="KW-0342">GTP-binding</keyword>
<keyword id="KW-0460">Magnesium</keyword>
<keyword id="KW-0547">Nucleotide-binding</keyword>
<keyword id="KW-0808">Transferase</keyword>
<sequence length="209" mass="22945">MANVHVINHPLVQHKLTIIRDKNTGTKAFRELVDEVATLMAYEITRDMELEDIQVETPLQTTTAKTLTGKKLGIVPILRAGLGMQDGILKLIPAAKVGHVGLYRDHDTLEPVEYFVKLPSDVEERLFIVVDPMLATGGSAIMAIDCLKKRGARNMKFMCLVAAPEGVKALQDAHPDVEIYVAGLDEKLDENGYIRPGLGDAGDRLFGTK</sequence>
<reference key="1">
    <citation type="journal article" date="2011" name="J. Bacteriol.">
        <title>Genome sequence of lineage III Listeria monocytogenes strain HCC23.</title>
        <authorList>
            <person name="Steele C.L."/>
            <person name="Donaldson J.R."/>
            <person name="Paul D."/>
            <person name="Banes M.M."/>
            <person name="Arick T."/>
            <person name="Bridges S.M."/>
            <person name="Lawrence M.L."/>
        </authorList>
    </citation>
    <scope>NUCLEOTIDE SEQUENCE [LARGE SCALE GENOMIC DNA]</scope>
    <source>
        <strain>HCC23</strain>
    </source>
</reference>
<name>UPP_LISMH</name>
<dbReference type="EC" id="2.4.2.9" evidence="1"/>
<dbReference type="EMBL" id="CP001175">
    <property type="protein sequence ID" value="ACK38422.1"/>
    <property type="molecule type" value="Genomic_DNA"/>
</dbReference>
<dbReference type="RefSeq" id="WP_003723470.1">
    <property type="nucleotide sequence ID" value="NC_011660.1"/>
</dbReference>
<dbReference type="SMR" id="B8DBH1"/>
<dbReference type="GeneID" id="61190406"/>
<dbReference type="KEGG" id="lmh:LMHCC_0059"/>
<dbReference type="HOGENOM" id="CLU_067096_2_2_9"/>
<dbReference type="UniPathway" id="UPA00574">
    <property type="reaction ID" value="UER00636"/>
</dbReference>
<dbReference type="GO" id="GO:0005525">
    <property type="term" value="F:GTP binding"/>
    <property type="evidence" value="ECO:0007669"/>
    <property type="project" value="UniProtKB-KW"/>
</dbReference>
<dbReference type="GO" id="GO:0000287">
    <property type="term" value="F:magnesium ion binding"/>
    <property type="evidence" value="ECO:0007669"/>
    <property type="project" value="UniProtKB-UniRule"/>
</dbReference>
<dbReference type="GO" id="GO:0004845">
    <property type="term" value="F:uracil phosphoribosyltransferase activity"/>
    <property type="evidence" value="ECO:0007669"/>
    <property type="project" value="UniProtKB-UniRule"/>
</dbReference>
<dbReference type="GO" id="GO:0044206">
    <property type="term" value="P:UMP salvage"/>
    <property type="evidence" value="ECO:0007669"/>
    <property type="project" value="UniProtKB-UniRule"/>
</dbReference>
<dbReference type="GO" id="GO:0006223">
    <property type="term" value="P:uracil salvage"/>
    <property type="evidence" value="ECO:0007669"/>
    <property type="project" value="InterPro"/>
</dbReference>
<dbReference type="CDD" id="cd06223">
    <property type="entry name" value="PRTases_typeI"/>
    <property type="match status" value="1"/>
</dbReference>
<dbReference type="FunFam" id="3.40.50.2020:FF:000003">
    <property type="entry name" value="Uracil phosphoribosyltransferase"/>
    <property type="match status" value="1"/>
</dbReference>
<dbReference type="Gene3D" id="3.40.50.2020">
    <property type="match status" value="1"/>
</dbReference>
<dbReference type="HAMAP" id="MF_01218_B">
    <property type="entry name" value="Upp_B"/>
    <property type="match status" value="1"/>
</dbReference>
<dbReference type="InterPro" id="IPR000836">
    <property type="entry name" value="PRibTrfase_dom"/>
</dbReference>
<dbReference type="InterPro" id="IPR029057">
    <property type="entry name" value="PRTase-like"/>
</dbReference>
<dbReference type="InterPro" id="IPR034332">
    <property type="entry name" value="Upp_B"/>
</dbReference>
<dbReference type="InterPro" id="IPR050054">
    <property type="entry name" value="UPRTase/APRTase"/>
</dbReference>
<dbReference type="InterPro" id="IPR005765">
    <property type="entry name" value="Ura_phspho_trans"/>
</dbReference>
<dbReference type="NCBIfam" id="NF001097">
    <property type="entry name" value="PRK00129.1"/>
    <property type="match status" value="1"/>
</dbReference>
<dbReference type="NCBIfam" id="TIGR01091">
    <property type="entry name" value="upp"/>
    <property type="match status" value="1"/>
</dbReference>
<dbReference type="PANTHER" id="PTHR32315">
    <property type="entry name" value="ADENINE PHOSPHORIBOSYLTRANSFERASE"/>
    <property type="match status" value="1"/>
</dbReference>
<dbReference type="PANTHER" id="PTHR32315:SF4">
    <property type="entry name" value="URACIL PHOSPHORIBOSYLTRANSFERASE, CHLOROPLASTIC"/>
    <property type="match status" value="1"/>
</dbReference>
<dbReference type="Pfam" id="PF14681">
    <property type="entry name" value="UPRTase"/>
    <property type="match status" value="1"/>
</dbReference>
<dbReference type="SUPFAM" id="SSF53271">
    <property type="entry name" value="PRTase-like"/>
    <property type="match status" value="1"/>
</dbReference>
<comment type="function">
    <text evidence="1">Catalyzes the conversion of uracil and 5-phospho-alpha-D-ribose 1-diphosphate (PRPP) to UMP and diphosphate.</text>
</comment>
<comment type="catalytic activity">
    <reaction evidence="1">
        <text>UMP + diphosphate = 5-phospho-alpha-D-ribose 1-diphosphate + uracil</text>
        <dbReference type="Rhea" id="RHEA:13017"/>
        <dbReference type="ChEBI" id="CHEBI:17568"/>
        <dbReference type="ChEBI" id="CHEBI:33019"/>
        <dbReference type="ChEBI" id="CHEBI:57865"/>
        <dbReference type="ChEBI" id="CHEBI:58017"/>
        <dbReference type="EC" id="2.4.2.9"/>
    </reaction>
</comment>
<comment type="cofactor">
    <cofactor evidence="1">
        <name>Mg(2+)</name>
        <dbReference type="ChEBI" id="CHEBI:18420"/>
    </cofactor>
    <text evidence="1">Binds 1 Mg(2+) ion per subunit. The magnesium is bound as Mg-PRPP.</text>
</comment>
<comment type="activity regulation">
    <text evidence="1">Allosterically activated by GTP.</text>
</comment>
<comment type="pathway">
    <text evidence="1">Pyrimidine metabolism; UMP biosynthesis via salvage pathway; UMP from uracil: step 1/1.</text>
</comment>
<comment type="similarity">
    <text evidence="1">Belongs to the UPRTase family.</text>
</comment>
<evidence type="ECO:0000255" key="1">
    <source>
        <dbReference type="HAMAP-Rule" id="MF_01218"/>
    </source>
</evidence>
<organism>
    <name type="scientific">Listeria monocytogenes serotype 4a (strain HCC23)</name>
    <dbReference type="NCBI Taxonomy" id="552536"/>
    <lineage>
        <taxon>Bacteria</taxon>
        <taxon>Bacillati</taxon>
        <taxon>Bacillota</taxon>
        <taxon>Bacilli</taxon>
        <taxon>Bacillales</taxon>
        <taxon>Listeriaceae</taxon>
        <taxon>Listeria</taxon>
    </lineage>
</organism>